<protein>
    <recommendedName>
        <fullName evidence="2">Elongation factor Tu</fullName>
        <shortName evidence="2">EF-Tu</shortName>
        <ecNumber evidence="2">3.6.5.3</ecNumber>
    </recommendedName>
</protein>
<name>EFTU_BURPS</name>
<gene>
    <name evidence="2" type="primary">tuf1</name>
    <name type="ordered locus">BPSL3215</name>
</gene>
<gene>
    <name evidence="2" type="primary">tuf2</name>
    <name type="ordered locus">BPSL3228</name>
</gene>
<keyword id="KW-0963">Cytoplasm</keyword>
<keyword id="KW-0251">Elongation factor</keyword>
<keyword id="KW-0342">GTP-binding</keyword>
<keyword id="KW-0378">Hydrolase</keyword>
<keyword id="KW-0460">Magnesium</keyword>
<keyword id="KW-0479">Metal-binding</keyword>
<keyword id="KW-0547">Nucleotide-binding</keyword>
<keyword id="KW-0648">Protein biosynthesis</keyword>
<keyword id="KW-1185">Reference proteome</keyword>
<dbReference type="EC" id="3.6.5.3" evidence="2"/>
<dbReference type="EMBL" id="BX571965">
    <property type="protein sequence ID" value="CAH37226.1"/>
    <property type="molecule type" value="Genomic_DNA"/>
</dbReference>
<dbReference type="EMBL" id="BX571965">
    <property type="protein sequence ID" value="CAH37239.1"/>
    <property type="molecule type" value="Genomic_DNA"/>
</dbReference>
<dbReference type="RefSeq" id="YP_109809.1">
    <property type="nucleotide sequence ID" value="NC_006350.1"/>
</dbReference>
<dbReference type="RefSeq" id="YP_109822.1">
    <property type="nucleotide sequence ID" value="NC_006350.1"/>
</dbReference>
<dbReference type="SMR" id="Q63PZ6"/>
<dbReference type="STRING" id="272560.BPSL3215"/>
<dbReference type="KEGG" id="bps:BPSL3215"/>
<dbReference type="KEGG" id="bps:BPSL3228"/>
<dbReference type="PATRIC" id="fig|272560.51.peg.2010"/>
<dbReference type="eggNOG" id="COG0050">
    <property type="taxonomic scope" value="Bacteria"/>
</dbReference>
<dbReference type="Proteomes" id="UP000000605">
    <property type="component" value="Chromosome 1"/>
</dbReference>
<dbReference type="GO" id="GO:0005737">
    <property type="term" value="C:cytoplasm"/>
    <property type="evidence" value="ECO:0007669"/>
    <property type="project" value="UniProtKB-SubCell"/>
</dbReference>
<dbReference type="GO" id="GO:0005525">
    <property type="term" value="F:GTP binding"/>
    <property type="evidence" value="ECO:0007669"/>
    <property type="project" value="UniProtKB-UniRule"/>
</dbReference>
<dbReference type="GO" id="GO:0003924">
    <property type="term" value="F:GTPase activity"/>
    <property type="evidence" value="ECO:0007669"/>
    <property type="project" value="InterPro"/>
</dbReference>
<dbReference type="GO" id="GO:0097216">
    <property type="term" value="F:guanosine tetraphosphate binding"/>
    <property type="evidence" value="ECO:0007669"/>
    <property type="project" value="UniProtKB-ARBA"/>
</dbReference>
<dbReference type="GO" id="GO:0003746">
    <property type="term" value="F:translation elongation factor activity"/>
    <property type="evidence" value="ECO:0007669"/>
    <property type="project" value="UniProtKB-UniRule"/>
</dbReference>
<dbReference type="CDD" id="cd01884">
    <property type="entry name" value="EF_Tu"/>
    <property type="match status" value="1"/>
</dbReference>
<dbReference type="CDD" id="cd03697">
    <property type="entry name" value="EFTU_II"/>
    <property type="match status" value="1"/>
</dbReference>
<dbReference type="CDD" id="cd03707">
    <property type="entry name" value="EFTU_III"/>
    <property type="match status" value="1"/>
</dbReference>
<dbReference type="FunFam" id="2.40.30.10:FF:000001">
    <property type="entry name" value="Elongation factor Tu"/>
    <property type="match status" value="1"/>
</dbReference>
<dbReference type="FunFam" id="3.40.50.300:FF:000003">
    <property type="entry name" value="Elongation factor Tu"/>
    <property type="match status" value="1"/>
</dbReference>
<dbReference type="Gene3D" id="3.40.50.300">
    <property type="entry name" value="P-loop containing nucleotide triphosphate hydrolases"/>
    <property type="match status" value="1"/>
</dbReference>
<dbReference type="Gene3D" id="2.40.30.10">
    <property type="entry name" value="Translation factors"/>
    <property type="match status" value="2"/>
</dbReference>
<dbReference type="HAMAP" id="MF_00118_B">
    <property type="entry name" value="EF_Tu_B"/>
    <property type="match status" value="1"/>
</dbReference>
<dbReference type="InterPro" id="IPR041709">
    <property type="entry name" value="EF-Tu_GTP-bd"/>
</dbReference>
<dbReference type="InterPro" id="IPR050055">
    <property type="entry name" value="EF-Tu_GTPase"/>
</dbReference>
<dbReference type="InterPro" id="IPR004161">
    <property type="entry name" value="EFTu-like_2"/>
</dbReference>
<dbReference type="InterPro" id="IPR033720">
    <property type="entry name" value="EFTU_2"/>
</dbReference>
<dbReference type="InterPro" id="IPR031157">
    <property type="entry name" value="G_TR_CS"/>
</dbReference>
<dbReference type="InterPro" id="IPR027417">
    <property type="entry name" value="P-loop_NTPase"/>
</dbReference>
<dbReference type="InterPro" id="IPR005225">
    <property type="entry name" value="Small_GTP-bd"/>
</dbReference>
<dbReference type="InterPro" id="IPR000795">
    <property type="entry name" value="T_Tr_GTP-bd_dom"/>
</dbReference>
<dbReference type="InterPro" id="IPR009000">
    <property type="entry name" value="Transl_B-barrel_sf"/>
</dbReference>
<dbReference type="InterPro" id="IPR009001">
    <property type="entry name" value="Transl_elong_EF1A/Init_IF2_C"/>
</dbReference>
<dbReference type="InterPro" id="IPR004541">
    <property type="entry name" value="Transl_elong_EFTu/EF1A_bac/org"/>
</dbReference>
<dbReference type="InterPro" id="IPR004160">
    <property type="entry name" value="Transl_elong_EFTu/EF1A_C"/>
</dbReference>
<dbReference type="NCBIfam" id="TIGR00485">
    <property type="entry name" value="EF-Tu"/>
    <property type="match status" value="1"/>
</dbReference>
<dbReference type="NCBIfam" id="NF000766">
    <property type="entry name" value="PRK00049.1"/>
    <property type="match status" value="1"/>
</dbReference>
<dbReference type="NCBIfam" id="NF009372">
    <property type="entry name" value="PRK12735.1"/>
    <property type="match status" value="1"/>
</dbReference>
<dbReference type="NCBIfam" id="NF009373">
    <property type="entry name" value="PRK12736.1"/>
    <property type="match status" value="1"/>
</dbReference>
<dbReference type="NCBIfam" id="TIGR00231">
    <property type="entry name" value="small_GTP"/>
    <property type="match status" value="1"/>
</dbReference>
<dbReference type="PANTHER" id="PTHR43721:SF22">
    <property type="entry name" value="ELONGATION FACTOR TU, MITOCHONDRIAL"/>
    <property type="match status" value="1"/>
</dbReference>
<dbReference type="PANTHER" id="PTHR43721">
    <property type="entry name" value="ELONGATION FACTOR TU-RELATED"/>
    <property type="match status" value="1"/>
</dbReference>
<dbReference type="Pfam" id="PF00009">
    <property type="entry name" value="GTP_EFTU"/>
    <property type="match status" value="1"/>
</dbReference>
<dbReference type="Pfam" id="PF03144">
    <property type="entry name" value="GTP_EFTU_D2"/>
    <property type="match status" value="1"/>
</dbReference>
<dbReference type="Pfam" id="PF03143">
    <property type="entry name" value="GTP_EFTU_D3"/>
    <property type="match status" value="1"/>
</dbReference>
<dbReference type="PRINTS" id="PR00315">
    <property type="entry name" value="ELONGATNFCT"/>
</dbReference>
<dbReference type="SUPFAM" id="SSF50465">
    <property type="entry name" value="EF-Tu/eEF-1alpha/eIF2-gamma C-terminal domain"/>
    <property type="match status" value="1"/>
</dbReference>
<dbReference type="SUPFAM" id="SSF52540">
    <property type="entry name" value="P-loop containing nucleoside triphosphate hydrolases"/>
    <property type="match status" value="1"/>
</dbReference>
<dbReference type="SUPFAM" id="SSF50447">
    <property type="entry name" value="Translation proteins"/>
    <property type="match status" value="1"/>
</dbReference>
<dbReference type="PROSITE" id="PS00301">
    <property type="entry name" value="G_TR_1"/>
    <property type="match status" value="1"/>
</dbReference>
<dbReference type="PROSITE" id="PS51722">
    <property type="entry name" value="G_TR_2"/>
    <property type="match status" value="1"/>
</dbReference>
<comment type="function">
    <text evidence="2">GTP hydrolase that promotes the GTP-dependent binding of aminoacyl-tRNA to the A-site of ribosomes during protein biosynthesis.</text>
</comment>
<comment type="catalytic activity">
    <reaction evidence="2">
        <text>GTP + H2O = GDP + phosphate + H(+)</text>
        <dbReference type="Rhea" id="RHEA:19669"/>
        <dbReference type="ChEBI" id="CHEBI:15377"/>
        <dbReference type="ChEBI" id="CHEBI:15378"/>
        <dbReference type="ChEBI" id="CHEBI:37565"/>
        <dbReference type="ChEBI" id="CHEBI:43474"/>
        <dbReference type="ChEBI" id="CHEBI:58189"/>
        <dbReference type="EC" id="3.6.5.3"/>
    </reaction>
    <physiologicalReaction direction="left-to-right" evidence="2">
        <dbReference type="Rhea" id="RHEA:19670"/>
    </physiologicalReaction>
</comment>
<comment type="subunit">
    <text evidence="2">Monomer.</text>
</comment>
<comment type="subcellular location">
    <subcellularLocation>
        <location evidence="2">Cytoplasm</location>
    </subcellularLocation>
</comment>
<comment type="similarity">
    <text evidence="2">Belongs to the TRAFAC class translation factor GTPase superfamily. Classic translation factor GTPase family. EF-Tu/EF-1A subfamily.</text>
</comment>
<accession>Q63PZ6</accession>
<feature type="chain" id="PRO_0000337341" description="Elongation factor Tu">
    <location>
        <begin position="1"/>
        <end position="396"/>
    </location>
</feature>
<feature type="domain" description="tr-type G">
    <location>
        <begin position="10"/>
        <end position="206"/>
    </location>
</feature>
<feature type="region of interest" description="G1" evidence="1">
    <location>
        <begin position="19"/>
        <end position="26"/>
    </location>
</feature>
<feature type="region of interest" description="G2" evidence="1">
    <location>
        <begin position="60"/>
        <end position="64"/>
    </location>
</feature>
<feature type="region of interest" description="G3" evidence="1">
    <location>
        <begin position="81"/>
        <end position="84"/>
    </location>
</feature>
<feature type="region of interest" description="G4" evidence="1">
    <location>
        <begin position="136"/>
        <end position="139"/>
    </location>
</feature>
<feature type="region of interest" description="G5" evidence="1">
    <location>
        <begin position="174"/>
        <end position="176"/>
    </location>
</feature>
<feature type="binding site" evidence="2">
    <location>
        <begin position="19"/>
        <end position="26"/>
    </location>
    <ligand>
        <name>GTP</name>
        <dbReference type="ChEBI" id="CHEBI:37565"/>
    </ligand>
</feature>
<feature type="binding site" evidence="2">
    <location>
        <position position="26"/>
    </location>
    <ligand>
        <name>Mg(2+)</name>
        <dbReference type="ChEBI" id="CHEBI:18420"/>
    </ligand>
</feature>
<feature type="binding site" evidence="2">
    <location>
        <begin position="81"/>
        <end position="85"/>
    </location>
    <ligand>
        <name>GTP</name>
        <dbReference type="ChEBI" id="CHEBI:37565"/>
    </ligand>
</feature>
<feature type="binding site" evidence="2">
    <location>
        <begin position="136"/>
        <end position="139"/>
    </location>
    <ligand>
        <name>GTP</name>
        <dbReference type="ChEBI" id="CHEBI:37565"/>
    </ligand>
</feature>
<proteinExistence type="inferred from homology"/>
<sequence length="396" mass="42991">MAKEKFERTKPHVNVGTIGHVDHGKTTLTAAIATVLSAKFGGEAKKYDEIDAAPEEKARGITINTAHIEYETANRHYAHVDCPGHADYVKNMITGAAQMDGAILVCSAADGPMPQTREHILLARQVGVPYIIVFLNKCDMVDDAELLELVEMEVRELLSKYDFPGDDTPIIKGSAKLALEGDKGELGEVAIMNLADALDTYIPTPERAVDGAFLMPVEDVFSISGRGTVVTGRVERGVIKVGEEIEIVGIKATAKTTCTGVEMFRKLLDQGQAGDNVGILLRGTKREDVERGQVLAKPGSITPHTHFTAEVYVLSKDEGGRHTPFFNNYRPQFYFRTTDVTGSIELPKDKEMVMPGDNVSITVKLIAPIAMEEGLRFAIREGGRTVGAGVVAKIIE</sequence>
<reference key="1">
    <citation type="journal article" date="2004" name="Proc. Natl. Acad. Sci. U.S.A.">
        <title>Genomic plasticity of the causative agent of melioidosis, Burkholderia pseudomallei.</title>
        <authorList>
            <person name="Holden M.T.G."/>
            <person name="Titball R.W."/>
            <person name="Peacock S.J."/>
            <person name="Cerdeno-Tarraga A.-M."/>
            <person name="Atkins T."/>
            <person name="Crossman L.C."/>
            <person name="Pitt T."/>
            <person name="Churcher C."/>
            <person name="Mungall K.L."/>
            <person name="Bentley S.D."/>
            <person name="Sebaihia M."/>
            <person name="Thomson N.R."/>
            <person name="Bason N."/>
            <person name="Beacham I.R."/>
            <person name="Brooks K."/>
            <person name="Brown K.A."/>
            <person name="Brown N.F."/>
            <person name="Challis G.L."/>
            <person name="Cherevach I."/>
            <person name="Chillingworth T."/>
            <person name="Cronin A."/>
            <person name="Crossett B."/>
            <person name="Davis P."/>
            <person name="DeShazer D."/>
            <person name="Feltwell T."/>
            <person name="Fraser A."/>
            <person name="Hance Z."/>
            <person name="Hauser H."/>
            <person name="Holroyd S."/>
            <person name="Jagels K."/>
            <person name="Keith K.E."/>
            <person name="Maddison M."/>
            <person name="Moule S."/>
            <person name="Price C."/>
            <person name="Quail M.A."/>
            <person name="Rabbinowitsch E."/>
            <person name="Rutherford K."/>
            <person name="Sanders M."/>
            <person name="Simmonds M."/>
            <person name="Songsivilai S."/>
            <person name="Stevens K."/>
            <person name="Tumapa S."/>
            <person name="Vesaratchavest M."/>
            <person name="Whitehead S."/>
            <person name="Yeats C."/>
            <person name="Barrell B.G."/>
            <person name="Oyston P.C.F."/>
            <person name="Parkhill J."/>
        </authorList>
    </citation>
    <scope>NUCLEOTIDE SEQUENCE [LARGE SCALE GENOMIC DNA]</scope>
    <source>
        <strain>K96243</strain>
    </source>
</reference>
<evidence type="ECO:0000250" key="1"/>
<evidence type="ECO:0000255" key="2">
    <source>
        <dbReference type="HAMAP-Rule" id="MF_00118"/>
    </source>
</evidence>
<organism>
    <name type="scientific">Burkholderia pseudomallei (strain K96243)</name>
    <dbReference type="NCBI Taxonomy" id="272560"/>
    <lineage>
        <taxon>Bacteria</taxon>
        <taxon>Pseudomonadati</taxon>
        <taxon>Pseudomonadota</taxon>
        <taxon>Betaproteobacteria</taxon>
        <taxon>Burkholderiales</taxon>
        <taxon>Burkholderiaceae</taxon>
        <taxon>Burkholderia</taxon>
        <taxon>pseudomallei group</taxon>
    </lineage>
</organism>